<keyword id="KW-0004">4Fe-4S</keyword>
<keyword id="KW-0963">Cytoplasm</keyword>
<keyword id="KW-0408">Iron</keyword>
<keyword id="KW-0411">Iron-sulfur</keyword>
<keyword id="KW-0479">Metal-binding</keyword>
<keyword id="KW-0949">S-adenosyl-L-methionine</keyword>
<keyword id="KW-0808">Transferase</keyword>
<protein>
    <recommendedName>
        <fullName evidence="1">Lipoyl synthase</fullName>
        <ecNumber evidence="1">2.8.1.8</ecNumber>
    </recommendedName>
    <alternativeName>
        <fullName evidence="1">Lip-syn</fullName>
        <shortName evidence="1">LS</shortName>
    </alternativeName>
    <alternativeName>
        <fullName evidence="1">Lipoate synthase</fullName>
    </alternativeName>
    <alternativeName>
        <fullName evidence="1">Lipoic acid synthase</fullName>
    </alternativeName>
    <alternativeName>
        <fullName evidence="1">Sulfur insertion protein LipA</fullName>
    </alternativeName>
</protein>
<dbReference type="EC" id="2.8.1.8" evidence="1"/>
<dbReference type="EMBL" id="CP000764">
    <property type="protein sequence ID" value="ABS23771.1"/>
    <property type="molecule type" value="Genomic_DNA"/>
</dbReference>
<dbReference type="RefSeq" id="WP_012096022.1">
    <property type="nucleotide sequence ID" value="NC_009674.1"/>
</dbReference>
<dbReference type="SMR" id="A7GUG3"/>
<dbReference type="STRING" id="315749.Bcer98_3568"/>
<dbReference type="GeneID" id="33898823"/>
<dbReference type="KEGG" id="bcy:Bcer98_3568"/>
<dbReference type="eggNOG" id="COG0320">
    <property type="taxonomic scope" value="Bacteria"/>
</dbReference>
<dbReference type="HOGENOM" id="CLU_033144_2_1_9"/>
<dbReference type="OrthoDB" id="9787898at2"/>
<dbReference type="Proteomes" id="UP000002300">
    <property type="component" value="Chromosome"/>
</dbReference>
<dbReference type="GO" id="GO:0005737">
    <property type="term" value="C:cytoplasm"/>
    <property type="evidence" value="ECO:0007669"/>
    <property type="project" value="UniProtKB-SubCell"/>
</dbReference>
<dbReference type="GO" id="GO:0051539">
    <property type="term" value="F:4 iron, 4 sulfur cluster binding"/>
    <property type="evidence" value="ECO:0007669"/>
    <property type="project" value="UniProtKB-UniRule"/>
</dbReference>
<dbReference type="GO" id="GO:0016992">
    <property type="term" value="F:lipoate synthase activity"/>
    <property type="evidence" value="ECO:0007669"/>
    <property type="project" value="UniProtKB-UniRule"/>
</dbReference>
<dbReference type="GO" id="GO:0046872">
    <property type="term" value="F:metal ion binding"/>
    <property type="evidence" value="ECO:0007669"/>
    <property type="project" value="UniProtKB-KW"/>
</dbReference>
<dbReference type="CDD" id="cd01335">
    <property type="entry name" value="Radical_SAM"/>
    <property type="match status" value="1"/>
</dbReference>
<dbReference type="FunFam" id="3.20.20.70:FF:000040">
    <property type="entry name" value="Lipoyl synthase"/>
    <property type="match status" value="1"/>
</dbReference>
<dbReference type="Gene3D" id="3.20.20.70">
    <property type="entry name" value="Aldolase class I"/>
    <property type="match status" value="1"/>
</dbReference>
<dbReference type="HAMAP" id="MF_00206">
    <property type="entry name" value="Lipoyl_synth"/>
    <property type="match status" value="1"/>
</dbReference>
<dbReference type="InterPro" id="IPR013785">
    <property type="entry name" value="Aldolase_TIM"/>
</dbReference>
<dbReference type="InterPro" id="IPR006638">
    <property type="entry name" value="Elp3/MiaA/NifB-like_rSAM"/>
</dbReference>
<dbReference type="InterPro" id="IPR031691">
    <property type="entry name" value="LIAS_N"/>
</dbReference>
<dbReference type="InterPro" id="IPR003698">
    <property type="entry name" value="Lipoyl_synth"/>
</dbReference>
<dbReference type="InterPro" id="IPR007197">
    <property type="entry name" value="rSAM"/>
</dbReference>
<dbReference type="NCBIfam" id="TIGR00510">
    <property type="entry name" value="lipA"/>
    <property type="match status" value="1"/>
</dbReference>
<dbReference type="NCBIfam" id="NF004019">
    <property type="entry name" value="PRK05481.1"/>
    <property type="match status" value="1"/>
</dbReference>
<dbReference type="NCBIfam" id="NF009544">
    <property type="entry name" value="PRK12928.1"/>
    <property type="match status" value="1"/>
</dbReference>
<dbReference type="PANTHER" id="PTHR10949">
    <property type="entry name" value="LIPOYL SYNTHASE"/>
    <property type="match status" value="1"/>
</dbReference>
<dbReference type="PANTHER" id="PTHR10949:SF0">
    <property type="entry name" value="LIPOYL SYNTHASE, MITOCHONDRIAL"/>
    <property type="match status" value="1"/>
</dbReference>
<dbReference type="Pfam" id="PF16881">
    <property type="entry name" value="LIAS_N"/>
    <property type="match status" value="1"/>
</dbReference>
<dbReference type="Pfam" id="PF04055">
    <property type="entry name" value="Radical_SAM"/>
    <property type="match status" value="1"/>
</dbReference>
<dbReference type="PIRSF" id="PIRSF005963">
    <property type="entry name" value="Lipoyl_synth"/>
    <property type="match status" value="1"/>
</dbReference>
<dbReference type="SFLD" id="SFLDF00271">
    <property type="entry name" value="lipoyl_synthase"/>
    <property type="match status" value="1"/>
</dbReference>
<dbReference type="SFLD" id="SFLDG01058">
    <property type="entry name" value="lipoyl_synthase_like"/>
    <property type="match status" value="1"/>
</dbReference>
<dbReference type="SMART" id="SM00729">
    <property type="entry name" value="Elp3"/>
    <property type="match status" value="1"/>
</dbReference>
<dbReference type="SUPFAM" id="SSF102114">
    <property type="entry name" value="Radical SAM enzymes"/>
    <property type="match status" value="1"/>
</dbReference>
<dbReference type="PROSITE" id="PS51918">
    <property type="entry name" value="RADICAL_SAM"/>
    <property type="match status" value="1"/>
</dbReference>
<sequence length="298" mass="33786">MTKQTEYKRKPEWLKIKLNTNENYTGLKKMMRSKQLHTVCEEAKCPNIHECWAVRKTATFMILGAICTRACRFCAVKTGLPTELDLQEPERVADSVVQMGLKHVVITAVARDDLKDGGAAVFAETVRAVRRKNPFTSIEVLPSDMGGVEENLRILMDAKPDILNHNIETVRRLSDRVRARAKYDRSLEFLRRAKEMQPDIPTKSSIMVGLGETREDLLEAMDDLRANNVDILTLGQYLQPSKKHLPVIRYYTPAEFAELKEIALSKGFSHCEAGPLVRSSYHADEQVRSAKENTVEAK</sequence>
<feature type="chain" id="PRO_1000077948" description="Lipoyl synthase">
    <location>
        <begin position="1"/>
        <end position="298"/>
    </location>
</feature>
<feature type="domain" description="Radical SAM core" evidence="2">
    <location>
        <begin position="53"/>
        <end position="269"/>
    </location>
</feature>
<feature type="binding site" evidence="1">
    <location>
        <position position="40"/>
    </location>
    <ligand>
        <name>[4Fe-4S] cluster</name>
        <dbReference type="ChEBI" id="CHEBI:49883"/>
        <label>1</label>
    </ligand>
</feature>
<feature type="binding site" evidence="1">
    <location>
        <position position="45"/>
    </location>
    <ligand>
        <name>[4Fe-4S] cluster</name>
        <dbReference type="ChEBI" id="CHEBI:49883"/>
        <label>1</label>
    </ligand>
</feature>
<feature type="binding site" evidence="1">
    <location>
        <position position="51"/>
    </location>
    <ligand>
        <name>[4Fe-4S] cluster</name>
        <dbReference type="ChEBI" id="CHEBI:49883"/>
        <label>1</label>
    </ligand>
</feature>
<feature type="binding site" evidence="1">
    <location>
        <position position="67"/>
    </location>
    <ligand>
        <name>[4Fe-4S] cluster</name>
        <dbReference type="ChEBI" id="CHEBI:49883"/>
        <label>2</label>
        <note>4Fe-4S-S-AdoMet</note>
    </ligand>
</feature>
<feature type="binding site" evidence="1">
    <location>
        <position position="71"/>
    </location>
    <ligand>
        <name>[4Fe-4S] cluster</name>
        <dbReference type="ChEBI" id="CHEBI:49883"/>
        <label>2</label>
        <note>4Fe-4S-S-AdoMet</note>
    </ligand>
</feature>
<feature type="binding site" evidence="1">
    <location>
        <position position="74"/>
    </location>
    <ligand>
        <name>[4Fe-4S] cluster</name>
        <dbReference type="ChEBI" id="CHEBI:49883"/>
        <label>2</label>
        <note>4Fe-4S-S-AdoMet</note>
    </ligand>
</feature>
<feature type="binding site" evidence="1">
    <location>
        <position position="280"/>
    </location>
    <ligand>
        <name>[4Fe-4S] cluster</name>
        <dbReference type="ChEBI" id="CHEBI:49883"/>
        <label>1</label>
    </ligand>
</feature>
<proteinExistence type="inferred from homology"/>
<accession>A7GUG3</accession>
<reference key="1">
    <citation type="journal article" date="2008" name="Chem. Biol. Interact.">
        <title>Extending the Bacillus cereus group genomics to putative food-borne pathogens of different toxicity.</title>
        <authorList>
            <person name="Lapidus A."/>
            <person name="Goltsman E."/>
            <person name="Auger S."/>
            <person name="Galleron N."/>
            <person name="Segurens B."/>
            <person name="Dossat C."/>
            <person name="Land M.L."/>
            <person name="Broussolle V."/>
            <person name="Brillard J."/>
            <person name="Guinebretiere M.-H."/>
            <person name="Sanchis V."/>
            <person name="Nguen-the C."/>
            <person name="Lereclus D."/>
            <person name="Richardson P."/>
            <person name="Wincker P."/>
            <person name="Weissenbach J."/>
            <person name="Ehrlich S.D."/>
            <person name="Sorokin A."/>
        </authorList>
    </citation>
    <scope>NUCLEOTIDE SEQUENCE [LARGE SCALE GENOMIC DNA]</scope>
    <source>
        <strain>DSM 22905 / CIP 110041 / 391-98 / NVH 391-98</strain>
    </source>
</reference>
<evidence type="ECO:0000255" key="1">
    <source>
        <dbReference type="HAMAP-Rule" id="MF_00206"/>
    </source>
</evidence>
<evidence type="ECO:0000255" key="2">
    <source>
        <dbReference type="PROSITE-ProRule" id="PRU01266"/>
    </source>
</evidence>
<comment type="function">
    <text evidence="1">Catalyzes the radical-mediated insertion of two sulfur atoms into the C-6 and C-8 positions of the octanoyl moiety bound to the lipoyl domains of lipoate-dependent enzymes, thereby converting the octanoylated domains into lipoylated derivatives.</text>
</comment>
<comment type="catalytic activity">
    <reaction evidence="1">
        <text>[[Fe-S] cluster scaffold protein carrying a second [4Fe-4S](2+) cluster] + N(6)-octanoyl-L-lysyl-[protein] + 2 oxidized [2Fe-2S]-[ferredoxin] + 2 S-adenosyl-L-methionine + 4 H(+) = [[Fe-S] cluster scaffold protein] + N(6)-[(R)-dihydrolipoyl]-L-lysyl-[protein] + 4 Fe(3+) + 2 hydrogen sulfide + 2 5'-deoxyadenosine + 2 L-methionine + 2 reduced [2Fe-2S]-[ferredoxin]</text>
        <dbReference type="Rhea" id="RHEA:16585"/>
        <dbReference type="Rhea" id="RHEA-COMP:9928"/>
        <dbReference type="Rhea" id="RHEA-COMP:10000"/>
        <dbReference type="Rhea" id="RHEA-COMP:10001"/>
        <dbReference type="Rhea" id="RHEA-COMP:10475"/>
        <dbReference type="Rhea" id="RHEA-COMP:14568"/>
        <dbReference type="Rhea" id="RHEA-COMP:14569"/>
        <dbReference type="ChEBI" id="CHEBI:15378"/>
        <dbReference type="ChEBI" id="CHEBI:17319"/>
        <dbReference type="ChEBI" id="CHEBI:29034"/>
        <dbReference type="ChEBI" id="CHEBI:29919"/>
        <dbReference type="ChEBI" id="CHEBI:33722"/>
        <dbReference type="ChEBI" id="CHEBI:33737"/>
        <dbReference type="ChEBI" id="CHEBI:33738"/>
        <dbReference type="ChEBI" id="CHEBI:57844"/>
        <dbReference type="ChEBI" id="CHEBI:59789"/>
        <dbReference type="ChEBI" id="CHEBI:78809"/>
        <dbReference type="ChEBI" id="CHEBI:83100"/>
        <dbReference type="EC" id="2.8.1.8"/>
    </reaction>
</comment>
<comment type="cofactor">
    <cofactor evidence="1">
        <name>[4Fe-4S] cluster</name>
        <dbReference type="ChEBI" id="CHEBI:49883"/>
    </cofactor>
    <text evidence="1">Binds 2 [4Fe-4S] clusters per subunit. One cluster is coordinated with 3 cysteines and an exchangeable S-adenosyl-L-methionine.</text>
</comment>
<comment type="pathway">
    <text evidence="1">Protein modification; protein lipoylation via endogenous pathway; protein N(6)-(lipoyl)lysine from octanoyl-[acyl-carrier-protein].</text>
</comment>
<comment type="subcellular location">
    <subcellularLocation>
        <location evidence="1">Cytoplasm</location>
    </subcellularLocation>
</comment>
<comment type="similarity">
    <text evidence="1">Belongs to the radical SAM superfamily. Lipoyl synthase family.</text>
</comment>
<name>LIPA_BACCN</name>
<gene>
    <name evidence="1" type="primary">lipA</name>
    <name type="ordered locus">Bcer98_3568</name>
</gene>
<organism>
    <name type="scientific">Bacillus cytotoxicus (strain DSM 22905 / CIP 110041 / 391-98 / NVH 391-98)</name>
    <dbReference type="NCBI Taxonomy" id="315749"/>
    <lineage>
        <taxon>Bacteria</taxon>
        <taxon>Bacillati</taxon>
        <taxon>Bacillota</taxon>
        <taxon>Bacilli</taxon>
        <taxon>Bacillales</taxon>
        <taxon>Bacillaceae</taxon>
        <taxon>Bacillus</taxon>
        <taxon>Bacillus cereus group</taxon>
    </lineage>
</organism>